<sequence>MNQATEIAKLLLNIKAVTLNLHEPYRYTSGILSPIYCDNRLIISYPEKRKMIIEAFLQLIEKNHLSFDIVAGTATAGIPHAAWIADRLDLPMIYVRAKAKTHGKQNQIEGRIRKGQRALIVEDLISTGKSALAAGLALREKGVTVTDCIAIFSYQLPQAQQNFSDANINCHALSHFDTLIEMAVDEGYIDEIEKQKALAWNKDPEHWQP</sequence>
<evidence type="ECO:0000255" key="1">
    <source>
        <dbReference type="HAMAP-Rule" id="MF_01208"/>
    </source>
</evidence>
<evidence type="ECO:0000305" key="2"/>
<protein>
    <recommendedName>
        <fullName evidence="1">Orotate phosphoribosyltransferase</fullName>
        <shortName evidence="1">OPRT</shortName>
        <shortName evidence="1">OPRTase</shortName>
        <ecNumber evidence="1">2.4.2.10</ecNumber>
    </recommendedName>
</protein>
<comment type="function">
    <text evidence="1">Catalyzes the transfer of a ribosyl phosphate group from 5-phosphoribose 1-diphosphate to orotate, leading to the formation of orotidine monophosphate (OMP).</text>
</comment>
<comment type="catalytic activity">
    <reaction evidence="1">
        <text>orotidine 5'-phosphate + diphosphate = orotate + 5-phospho-alpha-D-ribose 1-diphosphate</text>
        <dbReference type="Rhea" id="RHEA:10380"/>
        <dbReference type="ChEBI" id="CHEBI:30839"/>
        <dbReference type="ChEBI" id="CHEBI:33019"/>
        <dbReference type="ChEBI" id="CHEBI:57538"/>
        <dbReference type="ChEBI" id="CHEBI:58017"/>
        <dbReference type="EC" id="2.4.2.10"/>
    </reaction>
</comment>
<comment type="cofactor">
    <cofactor evidence="1">
        <name>Mg(2+)</name>
        <dbReference type="ChEBI" id="CHEBI:18420"/>
    </cofactor>
</comment>
<comment type="pathway">
    <text evidence="1">Pyrimidine metabolism; UMP biosynthesis via de novo pathway; UMP from orotate: step 1/2.</text>
</comment>
<comment type="subunit">
    <text evidence="1">Homodimer.</text>
</comment>
<comment type="similarity">
    <text evidence="1">Belongs to the purine/pyrimidine phosphoribosyltransferase family. PyrE subfamily.</text>
</comment>
<comment type="sequence caution" evidence="2">
    <conflict type="erroneous initiation">
        <sequence resource="EMBL-CDS" id="AAO89853"/>
    </conflict>
</comment>
<organism>
    <name type="scientific">Coxiella burnetii (strain RSA 493 / Nine Mile phase I)</name>
    <dbReference type="NCBI Taxonomy" id="227377"/>
    <lineage>
        <taxon>Bacteria</taxon>
        <taxon>Pseudomonadati</taxon>
        <taxon>Pseudomonadota</taxon>
        <taxon>Gammaproteobacteria</taxon>
        <taxon>Legionellales</taxon>
        <taxon>Coxiellaceae</taxon>
        <taxon>Coxiella</taxon>
    </lineage>
</organism>
<name>PYRE_COXBU</name>
<dbReference type="EC" id="2.4.2.10" evidence="1"/>
<dbReference type="EMBL" id="X79075">
    <property type="protein sequence ID" value="CAA55676.1"/>
    <property type="molecule type" value="Genomic_DNA"/>
</dbReference>
<dbReference type="EMBL" id="AE016828">
    <property type="protein sequence ID" value="AAO89853.2"/>
    <property type="status" value="ALT_INIT"/>
    <property type="molecule type" value="Genomic_DNA"/>
</dbReference>
<dbReference type="PIR" id="S44298">
    <property type="entry name" value="S44298"/>
</dbReference>
<dbReference type="RefSeq" id="NP_819339.2">
    <property type="nucleotide sequence ID" value="NC_002971.3"/>
</dbReference>
<dbReference type="SMR" id="Q45918"/>
<dbReference type="STRING" id="227377.CBU_0296"/>
<dbReference type="EnsemblBacteria" id="AAO89853">
    <property type="protein sequence ID" value="AAO89853"/>
    <property type="gene ID" value="CBU_0296"/>
</dbReference>
<dbReference type="GeneID" id="1208178"/>
<dbReference type="KEGG" id="cbu:CBU_0296"/>
<dbReference type="PATRIC" id="fig|227377.7.peg.291"/>
<dbReference type="eggNOG" id="COG0461">
    <property type="taxonomic scope" value="Bacteria"/>
</dbReference>
<dbReference type="HOGENOM" id="CLU_074878_1_1_6"/>
<dbReference type="OrthoDB" id="9803963at2"/>
<dbReference type="UniPathway" id="UPA00070">
    <property type="reaction ID" value="UER00119"/>
</dbReference>
<dbReference type="Proteomes" id="UP000002671">
    <property type="component" value="Chromosome"/>
</dbReference>
<dbReference type="GO" id="GO:0000287">
    <property type="term" value="F:magnesium ion binding"/>
    <property type="evidence" value="ECO:0007669"/>
    <property type="project" value="UniProtKB-UniRule"/>
</dbReference>
<dbReference type="GO" id="GO:0004588">
    <property type="term" value="F:orotate phosphoribosyltransferase activity"/>
    <property type="evidence" value="ECO:0000318"/>
    <property type="project" value="GO_Central"/>
</dbReference>
<dbReference type="GO" id="GO:0044205">
    <property type="term" value="P:'de novo' UMP biosynthetic process"/>
    <property type="evidence" value="ECO:0007669"/>
    <property type="project" value="UniProtKB-UniRule"/>
</dbReference>
<dbReference type="GO" id="GO:0019856">
    <property type="term" value="P:pyrimidine nucleobase biosynthetic process"/>
    <property type="evidence" value="ECO:0000318"/>
    <property type="project" value="GO_Central"/>
</dbReference>
<dbReference type="GO" id="GO:0006222">
    <property type="term" value="P:UMP biosynthetic process"/>
    <property type="evidence" value="ECO:0000318"/>
    <property type="project" value="GO_Central"/>
</dbReference>
<dbReference type="CDD" id="cd06223">
    <property type="entry name" value="PRTases_typeI"/>
    <property type="match status" value="1"/>
</dbReference>
<dbReference type="Gene3D" id="3.40.50.2020">
    <property type="match status" value="1"/>
</dbReference>
<dbReference type="HAMAP" id="MF_01208">
    <property type="entry name" value="PyrE"/>
    <property type="match status" value="1"/>
</dbReference>
<dbReference type="InterPro" id="IPR023031">
    <property type="entry name" value="OPRT"/>
</dbReference>
<dbReference type="InterPro" id="IPR004467">
    <property type="entry name" value="Or_phspho_trans_dom"/>
</dbReference>
<dbReference type="InterPro" id="IPR000836">
    <property type="entry name" value="PRibTrfase_dom"/>
</dbReference>
<dbReference type="InterPro" id="IPR029057">
    <property type="entry name" value="PRTase-like"/>
</dbReference>
<dbReference type="NCBIfam" id="TIGR00336">
    <property type="entry name" value="pyrE"/>
    <property type="match status" value="1"/>
</dbReference>
<dbReference type="PANTHER" id="PTHR19278">
    <property type="entry name" value="OROTATE PHOSPHORIBOSYLTRANSFERASE"/>
    <property type="match status" value="1"/>
</dbReference>
<dbReference type="PANTHER" id="PTHR19278:SF9">
    <property type="entry name" value="URIDINE 5'-MONOPHOSPHATE SYNTHASE"/>
    <property type="match status" value="1"/>
</dbReference>
<dbReference type="Pfam" id="PF00156">
    <property type="entry name" value="Pribosyltran"/>
    <property type="match status" value="1"/>
</dbReference>
<dbReference type="SUPFAM" id="SSF53271">
    <property type="entry name" value="PRTase-like"/>
    <property type="match status" value="1"/>
</dbReference>
<dbReference type="PROSITE" id="PS00103">
    <property type="entry name" value="PUR_PYR_PR_TRANSFER"/>
    <property type="match status" value="1"/>
</dbReference>
<accession>Q45918</accession>
<reference key="1">
    <citation type="submission" date="1994-05" db="EMBL/GenBank/DDBJ databases">
        <authorList>
            <person name="Thiele D."/>
            <person name="Willems H."/>
            <person name="Oswald W."/>
            <person name="Krauss H."/>
        </authorList>
    </citation>
    <scope>NUCLEOTIDE SEQUENCE [GENOMIC DNA]</scope>
    <source>
        <strain>RSA 493 / Nine Mile phase I</strain>
    </source>
</reference>
<reference key="2">
    <citation type="journal article" date="2003" name="Proc. Natl. Acad. Sci. U.S.A.">
        <title>Complete genome sequence of the Q-fever pathogen, Coxiella burnetii.</title>
        <authorList>
            <person name="Seshadri R."/>
            <person name="Paulsen I.T."/>
            <person name="Eisen J.A."/>
            <person name="Read T.D."/>
            <person name="Nelson K.E."/>
            <person name="Nelson W.C."/>
            <person name="Ward N.L."/>
            <person name="Tettelin H."/>
            <person name="Davidsen T.M."/>
            <person name="Beanan M.J."/>
            <person name="DeBoy R.T."/>
            <person name="Daugherty S.C."/>
            <person name="Brinkac L.M."/>
            <person name="Madupu R."/>
            <person name="Dodson R.J."/>
            <person name="Khouri H.M."/>
            <person name="Lee K.H."/>
            <person name="Carty H.A."/>
            <person name="Scanlan D."/>
            <person name="Heinzen R.A."/>
            <person name="Thompson H.A."/>
            <person name="Samuel J.E."/>
            <person name="Fraser C.M."/>
            <person name="Heidelberg J.F."/>
        </authorList>
    </citation>
    <scope>NUCLEOTIDE SEQUENCE [LARGE SCALE GENOMIC DNA]</scope>
    <source>
        <strain>RSA 493 / Nine Mile phase I</strain>
    </source>
</reference>
<gene>
    <name evidence="1" type="primary">pyrE</name>
    <name type="ordered locus">CBU_0296</name>
</gene>
<feature type="chain" id="PRO_0000110692" description="Orotate phosphoribosyltransferase">
    <location>
        <begin position="1"/>
        <end position="209"/>
    </location>
</feature>
<feature type="binding site" evidence="1">
    <location>
        <position position="96"/>
    </location>
    <ligand>
        <name>5-phospho-alpha-D-ribose 1-diphosphate</name>
        <dbReference type="ChEBI" id="CHEBI:58017"/>
        <note>ligand shared between dimeric partners</note>
    </ligand>
</feature>
<feature type="binding site" evidence="1">
    <location>
        <position position="100"/>
    </location>
    <ligand>
        <name>5-phospho-alpha-D-ribose 1-diphosphate</name>
        <dbReference type="ChEBI" id="CHEBI:58017"/>
        <note>ligand shared between dimeric partners</note>
    </ligand>
</feature>
<feature type="binding site" evidence="1">
    <location>
        <position position="102"/>
    </location>
    <ligand>
        <name>5-phospho-alpha-D-ribose 1-diphosphate</name>
        <dbReference type="ChEBI" id="CHEBI:58017"/>
        <note>ligand shared between dimeric partners</note>
    </ligand>
</feature>
<feature type="binding site" description="in other chain" evidence="1">
    <location>
        <begin position="122"/>
        <end position="130"/>
    </location>
    <ligand>
        <name>5-phospho-alpha-D-ribose 1-diphosphate</name>
        <dbReference type="ChEBI" id="CHEBI:58017"/>
        <note>ligand shared between dimeric partners</note>
    </ligand>
</feature>
<feature type="binding site" evidence="1">
    <location>
        <position position="126"/>
    </location>
    <ligand>
        <name>orotate</name>
        <dbReference type="ChEBI" id="CHEBI:30839"/>
    </ligand>
</feature>
<proteinExistence type="inferred from homology"/>
<keyword id="KW-0328">Glycosyltransferase</keyword>
<keyword id="KW-0460">Magnesium</keyword>
<keyword id="KW-0665">Pyrimidine biosynthesis</keyword>
<keyword id="KW-1185">Reference proteome</keyword>
<keyword id="KW-0808">Transferase</keyword>